<gene>
    <name evidence="2" type="primary">trmB</name>
    <name type="ordered locus">BC_4696</name>
</gene>
<evidence type="ECO:0000250" key="1"/>
<evidence type="ECO:0000255" key="2">
    <source>
        <dbReference type="HAMAP-Rule" id="MF_01057"/>
    </source>
</evidence>
<comment type="function">
    <text evidence="2">Catalyzes the formation of N(7)-methylguanine at position 46 (m7G46) in tRNA.</text>
</comment>
<comment type="catalytic activity">
    <reaction evidence="2">
        <text>guanosine(46) in tRNA + S-adenosyl-L-methionine = N(7)-methylguanosine(46) in tRNA + S-adenosyl-L-homocysteine</text>
        <dbReference type="Rhea" id="RHEA:42708"/>
        <dbReference type="Rhea" id="RHEA-COMP:10188"/>
        <dbReference type="Rhea" id="RHEA-COMP:10189"/>
        <dbReference type="ChEBI" id="CHEBI:57856"/>
        <dbReference type="ChEBI" id="CHEBI:59789"/>
        <dbReference type="ChEBI" id="CHEBI:74269"/>
        <dbReference type="ChEBI" id="CHEBI:74480"/>
        <dbReference type="EC" id="2.1.1.33"/>
    </reaction>
</comment>
<comment type="pathway">
    <text evidence="2">tRNA modification; N(7)-methylguanine-tRNA biosynthesis.</text>
</comment>
<comment type="similarity">
    <text evidence="2">Belongs to the class I-like SAM-binding methyltransferase superfamily. TrmB family.</text>
</comment>
<feature type="chain" id="PRO_0000171290" description="tRNA (guanine-N(7)-)-methyltransferase">
    <location>
        <begin position="1"/>
        <end position="217"/>
    </location>
</feature>
<feature type="active site" evidence="1">
    <location>
        <position position="118"/>
    </location>
</feature>
<feature type="binding site" evidence="2">
    <location>
        <position position="44"/>
    </location>
    <ligand>
        <name>S-adenosyl-L-methionine</name>
        <dbReference type="ChEBI" id="CHEBI:59789"/>
    </ligand>
</feature>
<feature type="binding site" evidence="2">
    <location>
        <position position="69"/>
    </location>
    <ligand>
        <name>S-adenosyl-L-methionine</name>
        <dbReference type="ChEBI" id="CHEBI:59789"/>
    </ligand>
</feature>
<feature type="binding site" evidence="2">
    <location>
        <position position="96"/>
    </location>
    <ligand>
        <name>S-adenosyl-L-methionine</name>
        <dbReference type="ChEBI" id="CHEBI:59789"/>
    </ligand>
</feature>
<feature type="binding site" evidence="2">
    <location>
        <position position="118"/>
    </location>
    <ligand>
        <name>S-adenosyl-L-methionine</name>
        <dbReference type="ChEBI" id="CHEBI:59789"/>
    </ligand>
</feature>
<feature type="binding site" evidence="2">
    <location>
        <position position="122"/>
    </location>
    <ligand>
        <name>substrate</name>
    </ligand>
</feature>
<feature type="binding site" evidence="2">
    <location>
        <position position="154"/>
    </location>
    <ligand>
        <name>substrate</name>
    </ligand>
</feature>
<feature type="binding site" evidence="2">
    <location>
        <begin position="191"/>
        <end position="194"/>
    </location>
    <ligand>
        <name>substrate</name>
    </ligand>
</feature>
<sequence>MRLRHKPYAMDRINEYSHIVIGNPEERAGSWKEVFGNEQPIHIEVGTGRGRFMYDMAKANPHINYIGIEKFTSVVVDALDKLIEEELPNLKLINKDAEDLTVFFAKGEIDRVYLNFSDPWPKKRHTKRRLTYKTFLRNYEEVLVEGGEIHFKTDNQGLFEYSLMSMAEYGMLLTYLSLDLHNSDFEGNIMTEYEEKFSSKGHRIYRVEAKYRTEPMQ</sequence>
<organism>
    <name type="scientific">Bacillus cereus (strain ATCC 14579 / DSM 31 / CCUG 7414 / JCM 2152 / NBRC 15305 / NCIMB 9373 / NCTC 2599 / NRRL B-3711)</name>
    <dbReference type="NCBI Taxonomy" id="226900"/>
    <lineage>
        <taxon>Bacteria</taxon>
        <taxon>Bacillati</taxon>
        <taxon>Bacillota</taxon>
        <taxon>Bacilli</taxon>
        <taxon>Bacillales</taxon>
        <taxon>Bacillaceae</taxon>
        <taxon>Bacillus</taxon>
        <taxon>Bacillus cereus group</taxon>
    </lineage>
</organism>
<name>TRMB_BACCR</name>
<reference key="1">
    <citation type="journal article" date="2003" name="Nature">
        <title>Genome sequence of Bacillus cereus and comparative analysis with Bacillus anthracis.</title>
        <authorList>
            <person name="Ivanova N."/>
            <person name="Sorokin A."/>
            <person name="Anderson I."/>
            <person name="Galleron N."/>
            <person name="Candelon B."/>
            <person name="Kapatral V."/>
            <person name="Bhattacharyya A."/>
            <person name="Reznik G."/>
            <person name="Mikhailova N."/>
            <person name="Lapidus A."/>
            <person name="Chu L."/>
            <person name="Mazur M."/>
            <person name="Goltsman E."/>
            <person name="Larsen N."/>
            <person name="D'Souza M."/>
            <person name="Walunas T."/>
            <person name="Grechkin Y."/>
            <person name="Pusch G."/>
            <person name="Haselkorn R."/>
            <person name="Fonstein M."/>
            <person name="Ehrlich S.D."/>
            <person name="Overbeek R."/>
            <person name="Kyrpides N.C."/>
        </authorList>
    </citation>
    <scope>NUCLEOTIDE SEQUENCE [LARGE SCALE GENOMIC DNA]</scope>
    <source>
        <strain>ATCC 14579 / DSM 31 / CCUG 7414 / JCM 2152 / NBRC 15305 / NCIMB 9373 / NCTC 2599 / NRRL B-3711</strain>
    </source>
</reference>
<proteinExistence type="inferred from homology"/>
<keyword id="KW-0489">Methyltransferase</keyword>
<keyword id="KW-1185">Reference proteome</keyword>
<keyword id="KW-0949">S-adenosyl-L-methionine</keyword>
<keyword id="KW-0808">Transferase</keyword>
<keyword id="KW-0819">tRNA processing</keyword>
<accession>P59717</accession>
<protein>
    <recommendedName>
        <fullName evidence="2">tRNA (guanine-N(7)-)-methyltransferase</fullName>
        <ecNumber evidence="2">2.1.1.33</ecNumber>
    </recommendedName>
    <alternativeName>
        <fullName evidence="2">tRNA (guanine(46)-N(7))-methyltransferase</fullName>
    </alternativeName>
    <alternativeName>
        <fullName evidence="2">tRNA(m7G46)-methyltransferase</fullName>
    </alternativeName>
</protein>
<dbReference type="EC" id="2.1.1.33" evidence="2"/>
<dbReference type="EMBL" id="AE016877">
    <property type="protein sequence ID" value="AAP11603.1"/>
    <property type="molecule type" value="Genomic_DNA"/>
</dbReference>
<dbReference type="RefSeq" id="NP_834402.1">
    <property type="nucleotide sequence ID" value="NC_004722.1"/>
</dbReference>
<dbReference type="RefSeq" id="WP_001239385.1">
    <property type="nucleotide sequence ID" value="NZ_CP138336.1"/>
</dbReference>
<dbReference type="SMR" id="P59717"/>
<dbReference type="STRING" id="226900.BC_4696"/>
<dbReference type="KEGG" id="bce:BC4696"/>
<dbReference type="PATRIC" id="fig|226900.8.peg.4859"/>
<dbReference type="HOGENOM" id="CLU_050910_2_1_9"/>
<dbReference type="OrthoDB" id="9802090at2"/>
<dbReference type="UniPathway" id="UPA00989"/>
<dbReference type="Proteomes" id="UP000001417">
    <property type="component" value="Chromosome"/>
</dbReference>
<dbReference type="GO" id="GO:0043527">
    <property type="term" value="C:tRNA methyltransferase complex"/>
    <property type="evidence" value="ECO:0000318"/>
    <property type="project" value="GO_Central"/>
</dbReference>
<dbReference type="GO" id="GO:0008176">
    <property type="term" value="F:tRNA (guanine(46)-N7)-methyltransferase activity"/>
    <property type="evidence" value="ECO:0000318"/>
    <property type="project" value="GO_Central"/>
</dbReference>
<dbReference type="GO" id="GO:0036265">
    <property type="term" value="P:RNA (guanine-N7)-methylation"/>
    <property type="evidence" value="ECO:0000318"/>
    <property type="project" value="GO_Central"/>
</dbReference>
<dbReference type="GO" id="GO:0030488">
    <property type="term" value="P:tRNA methylation"/>
    <property type="evidence" value="ECO:0000318"/>
    <property type="project" value="GO_Central"/>
</dbReference>
<dbReference type="CDD" id="cd02440">
    <property type="entry name" value="AdoMet_MTases"/>
    <property type="match status" value="1"/>
</dbReference>
<dbReference type="FunFam" id="3.40.50.150:FF:000035">
    <property type="entry name" value="tRNA (guanine-N(7)-)-methyltransferase"/>
    <property type="match status" value="1"/>
</dbReference>
<dbReference type="Gene3D" id="3.40.50.150">
    <property type="entry name" value="Vaccinia Virus protein VP39"/>
    <property type="match status" value="1"/>
</dbReference>
<dbReference type="HAMAP" id="MF_01057">
    <property type="entry name" value="tRNA_methyltr_TrmB"/>
    <property type="match status" value="1"/>
</dbReference>
<dbReference type="InterPro" id="IPR029063">
    <property type="entry name" value="SAM-dependent_MTases_sf"/>
</dbReference>
<dbReference type="InterPro" id="IPR003358">
    <property type="entry name" value="tRNA_(Gua-N-7)_MeTrfase_Trmb"/>
</dbReference>
<dbReference type="InterPro" id="IPR055361">
    <property type="entry name" value="tRNA_methyltr_TrmB_bact"/>
</dbReference>
<dbReference type="NCBIfam" id="NF001080">
    <property type="entry name" value="PRK00121.2-2"/>
    <property type="match status" value="1"/>
</dbReference>
<dbReference type="NCBIfam" id="TIGR00091">
    <property type="entry name" value="tRNA (guanosine(46)-N7)-methyltransferase TrmB"/>
    <property type="match status" value="1"/>
</dbReference>
<dbReference type="PANTHER" id="PTHR23417">
    <property type="entry name" value="3-DEOXY-D-MANNO-OCTULOSONIC-ACID TRANSFERASE/TRNA GUANINE-N 7 - -METHYLTRANSFERASE"/>
    <property type="match status" value="1"/>
</dbReference>
<dbReference type="PANTHER" id="PTHR23417:SF14">
    <property type="entry name" value="PENTACOTRIPEPTIDE-REPEAT REGION OF PRORP DOMAIN-CONTAINING PROTEIN"/>
    <property type="match status" value="1"/>
</dbReference>
<dbReference type="Pfam" id="PF02390">
    <property type="entry name" value="Methyltransf_4"/>
    <property type="match status" value="1"/>
</dbReference>
<dbReference type="SUPFAM" id="SSF53335">
    <property type="entry name" value="S-adenosyl-L-methionine-dependent methyltransferases"/>
    <property type="match status" value="1"/>
</dbReference>
<dbReference type="PROSITE" id="PS51625">
    <property type="entry name" value="SAM_MT_TRMB"/>
    <property type="match status" value="1"/>
</dbReference>